<keyword id="KW-0028">Amino-acid biosynthesis</keyword>
<keyword id="KW-0963">Cytoplasm</keyword>
<keyword id="KW-0521">NADP</keyword>
<keyword id="KW-0560">Oxidoreductase</keyword>
<keyword id="KW-0641">Proline biosynthesis</keyword>
<keyword id="KW-1185">Reference proteome</keyword>
<gene>
    <name evidence="1" type="primary">proA2</name>
    <name type="ordered locus">BLi02148</name>
    <name type="ordered locus">BL01984</name>
</gene>
<name>PROA2_BACLD</name>
<evidence type="ECO:0000255" key="1">
    <source>
        <dbReference type="HAMAP-Rule" id="MF_00412"/>
    </source>
</evidence>
<dbReference type="EC" id="1.2.1.41" evidence="1"/>
<dbReference type="EMBL" id="AE017333">
    <property type="protein sequence ID" value="AAU41035.1"/>
    <property type="molecule type" value="Genomic_DNA"/>
</dbReference>
<dbReference type="EMBL" id="CP000002">
    <property type="protein sequence ID" value="AAU23673.1"/>
    <property type="molecule type" value="Genomic_DNA"/>
</dbReference>
<dbReference type="RefSeq" id="WP_003182464.1">
    <property type="nucleotide sequence ID" value="NC_006322.1"/>
</dbReference>
<dbReference type="SMR" id="Q65IS9"/>
<dbReference type="STRING" id="279010.BL01984"/>
<dbReference type="KEGG" id="bld:BLi02148"/>
<dbReference type="KEGG" id="bli:BL01984"/>
<dbReference type="eggNOG" id="COG0014">
    <property type="taxonomic scope" value="Bacteria"/>
</dbReference>
<dbReference type="HOGENOM" id="CLU_030231_0_0_9"/>
<dbReference type="UniPathway" id="UPA00098">
    <property type="reaction ID" value="UER00360"/>
</dbReference>
<dbReference type="Proteomes" id="UP000000606">
    <property type="component" value="Chromosome"/>
</dbReference>
<dbReference type="GO" id="GO:0005737">
    <property type="term" value="C:cytoplasm"/>
    <property type="evidence" value="ECO:0007669"/>
    <property type="project" value="UniProtKB-SubCell"/>
</dbReference>
<dbReference type="GO" id="GO:0004350">
    <property type="term" value="F:glutamate-5-semialdehyde dehydrogenase activity"/>
    <property type="evidence" value="ECO:0007669"/>
    <property type="project" value="UniProtKB-UniRule"/>
</dbReference>
<dbReference type="GO" id="GO:0050661">
    <property type="term" value="F:NADP binding"/>
    <property type="evidence" value="ECO:0007669"/>
    <property type="project" value="InterPro"/>
</dbReference>
<dbReference type="GO" id="GO:0055129">
    <property type="term" value="P:L-proline biosynthetic process"/>
    <property type="evidence" value="ECO:0007669"/>
    <property type="project" value="UniProtKB-UniRule"/>
</dbReference>
<dbReference type="CDD" id="cd07079">
    <property type="entry name" value="ALDH_F18-19_ProA-GPR"/>
    <property type="match status" value="1"/>
</dbReference>
<dbReference type="FunFam" id="3.40.309.10:FF:000006">
    <property type="entry name" value="Gamma-glutamyl phosphate reductase"/>
    <property type="match status" value="1"/>
</dbReference>
<dbReference type="Gene3D" id="3.40.605.10">
    <property type="entry name" value="Aldehyde Dehydrogenase, Chain A, domain 1"/>
    <property type="match status" value="1"/>
</dbReference>
<dbReference type="Gene3D" id="3.40.309.10">
    <property type="entry name" value="Aldehyde Dehydrogenase, Chain A, domain 2"/>
    <property type="match status" value="1"/>
</dbReference>
<dbReference type="HAMAP" id="MF_00412">
    <property type="entry name" value="ProA"/>
    <property type="match status" value="1"/>
</dbReference>
<dbReference type="InterPro" id="IPR016161">
    <property type="entry name" value="Ald_DH/histidinol_DH"/>
</dbReference>
<dbReference type="InterPro" id="IPR016163">
    <property type="entry name" value="Ald_DH_C"/>
</dbReference>
<dbReference type="InterPro" id="IPR016162">
    <property type="entry name" value="Ald_DH_N"/>
</dbReference>
<dbReference type="InterPro" id="IPR015590">
    <property type="entry name" value="Aldehyde_DH_dom"/>
</dbReference>
<dbReference type="InterPro" id="IPR020593">
    <property type="entry name" value="G-glutamylP_reductase_CS"/>
</dbReference>
<dbReference type="InterPro" id="IPR012134">
    <property type="entry name" value="Glu-5-SA_DH"/>
</dbReference>
<dbReference type="InterPro" id="IPR000965">
    <property type="entry name" value="GPR_dom"/>
</dbReference>
<dbReference type="NCBIfam" id="NF001221">
    <property type="entry name" value="PRK00197.1"/>
    <property type="match status" value="1"/>
</dbReference>
<dbReference type="NCBIfam" id="TIGR00407">
    <property type="entry name" value="proA"/>
    <property type="match status" value="1"/>
</dbReference>
<dbReference type="PANTHER" id="PTHR11063:SF8">
    <property type="entry name" value="DELTA-1-PYRROLINE-5-CARBOXYLATE SYNTHASE"/>
    <property type="match status" value="1"/>
</dbReference>
<dbReference type="PANTHER" id="PTHR11063">
    <property type="entry name" value="GLUTAMATE SEMIALDEHYDE DEHYDROGENASE"/>
    <property type="match status" value="1"/>
</dbReference>
<dbReference type="Pfam" id="PF00171">
    <property type="entry name" value="Aldedh"/>
    <property type="match status" value="1"/>
</dbReference>
<dbReference type="PIRSF" id="PIRSF000151">
    <property type="entry name" value="GPR"/>
    <property type="match status" value="1"/>
</dbReference>
<dbReference type="SUPFAM" id="SSF53720">
    <property type="entry name" value="ALDH-like"/>
    <property type="match status" value="1"/>
</dbReference>
<dbReference type="PROSITE" id="PS01223">
    <property type="entry name" value="PROA"/>
    <property type="match status" value="1"/>
</dbReference>
<proteinExistence type="inferred from homology"/>
<accession>Q65IS9</accession>
<accession>Q62U86</accession>
<organism>
    <name type="scientific">Bacillus licheniformis (strain ATCC 14580 / DSM 13 / JCM 2505 / CCUG 7422 / NBRC 12200 / NCIMB 9375 / NCTC 10341 / NRRL NRS-1264 / Gibson 46)</name>
    <dbReference type="NCBI Taxonomy" id="279010"/>
    <lineage>
        <taxon>Bacteria</taxon>
        <taxon>Bacillati</taxon>
        <taxon>Bacillota</taxon>
        <taxon>Bacilli</taxon>
        <taxon>Bacillales</taxon>
        <taxon>Bacillaceae</taxon>
        <taxon>Bacillus</taxon>
    </lineage>
</organism>
<sequence length="423" mass="45601">MTATSESISAQIEEKAIKAKTAAKSLRLATEKEKNEALAALADHLKQNMSYILTENAKDIEAGRKKGYDAAYIDRLSLNEDRVLDFADGLLEVAELDDPVGETLSSWTLDNGLKAEKVSVPLGVIGMIYEARPNVTVDATGLALKSGNAIVLKGGSSAIHSNTAIVSVMHQALDSTNIPRDAVQFIESTDRSATKQLFKMKEHIDVLIPRGGGALIQEVVENATVPVLETGVGNCHIYIDREADPEKAIDVMINAKTDRPAVCNALETLIVHEKWLEENSAALINALNEHGIQVHGDEKAVQMIPGARPAGEADWQNEYLSLDLAVKVAGSLEEACDHIETYGTKHSEAIITENPETAKAFLNTVDAAALYHNASTRFTDGGALGFGAEIGISTQKLHARGPMGLKELTTCKYIMRGDGHIRR</sequence>
<comment type="function">
    <text evidence="1">Catalyzes the NADPH-dependent reduction of L-glutamate 5-phosphate into L-glutamate 5-semialdehyde and phosphate. The product spontaneously undergoes cyclization to form 1-pyrroline-5-carboxylate.</text>
</comment>
<comment type="catalytic activity">
    <reaction evidence="1">
        <text>L-glutamate 5-semialdehyde + phosphate + NADP(+) = L-glutamyl 5-phosphate + NADPH + H(+)</text>
        <dbReference type="Rhea" id="RHEA:19541"/>
        <dbReference type="ChEBI" id="CHEBI:15378"/>
        <dbReference type="ChEBI" id="CHEBI:43474"/>
        <dbReference type="ChEBI" id="CHEBI:57783"/>
        <dbReference type="ChEBI" id="CHEBI:58066"/>
        <dbReference type="ChEBI" id="CHEBI:58274"/>
        <dbReference type="ChEBI" id="CHEBI:58349"/>
        <dbReference type="EC" id="1.2.1.41"/>
    </reaction>
</comment>
<comment type="pathway">
    <text evidence="1">Amino-acid biosynthesis; L-proline biosynthesis; L-glutamate 5-semialdehyde from L-glutamate: step 2/2.</text>
</comment>
<comment type="subcellular location">
    <subcellularLocation>
        <location evidence="1">Cytoplasm</location>
    </subcellularLocation>
</comment>
<comment type="similarity">
    <text evidence="1">Belongs to the gamma-glutamyl phosphate reductase family.</text>
</comment>
<protein>
    <recommendedName>
        <fullName evidence="1">Gamma-glutamyl phosphate reductase 2</fullName>
        <shortName evidence="1">GPR 2</shortName>
        <ecNumber evidence="1">1.2.1.41</ecNumber>
    </recommendedName>
    <alternativeName>
        <fullName evidence="1">Glutamate-5-semialdehyde dehydrogenase 2</fullName>
    </alternativeName>
    <alternativeName>
        <fullName evidence="1">Glutamyl-gamma-semialdehyde dehydrogenase 2</fullName>
        <shortName evidence="1">GSA dehydrogenase 2</shortName>
    </alternativeName>
</protein>
<feature type="chain" id="PRO_0000189694" description="Gamma-glutamyl phosphate reductase 2">
    <location>
        <begin position="1"/>
        <end position="423"/>
    </location>
</feature>
<reference key="1">
    <citation type="journal article" date="2004" name="J. Mol. Microbiol. Biotechnol.">
        <title>The complete genome sequence of Bacillus licheniformis DSM13, an organism with great industrial potential.</title>
        <authorList>
            <person name="Veith B."/>
            <person name="Herzberg C."/>
            <person name="Steckel S."/>
            <person name="Feesche J."/>
            <person name="Maurer K.H."/>
            <person name="Ehrenreich P."/>
            <person name="Baeumer S."/>
            <person name="Henne A."/>
            <person name="Liesegang H."/>
            <person name="Merkl R."/>
            <person name="Ehrenreich A."/>
            <person name="Gottschalk G."/>
        </authorList>
    </citation>
    <scope>NUCLEOTIDE SEQUENCE [LARGE SCALE GENOMIC DNA]</scope>
    <source>
        <strain>ATCC 14580 / DSM 13 / JCM 2505 / CCUG 7422 / NBRC 12200 / NCIMB 9375 / NCTC 10341 / NRRL NRS-1264 / Gibson 46</strain>
    </source>
</reference>
<reference key="2">
    <citation type="journal article" date="2004" name="Genome Biol.">
        <title>Complete genome sequence of the industrial bacterium Bacillus licheniformis and comparisons with closely related Bacillus species.</title>
        <authorList>
            <person name="Rey M.W."/>
            <person name="Ramaiya P."/>
            <person name="Nelson B.A."/>
            <person name="Brody-Karpin S.D."/>
            <person name="Zaretsky E.J."/>
            <person name="Tang M."/>
            <person name="Lopez de Leon A."/>
            <person name="Xiang H."/>
            <person name="Gusti V."/>
            <person name="Clausen I.G."/>
            <person name="Olsen P.B."/>
            <person name="Rasmussen M.D."/>
            <person name="Andersen J.T."/>
            <person name="Joergensen P.L."/>
            <person name="Larsen T.S."/>
            <person name="Sorokin A."/>
            <person name="Bolotin A."/>
            <person name="Lapidus A."/>
            <person name="Galleron N."/>
            <person name="Ehrlich S.D."/>
            <person name="Berka R.M."/>
        </authorList>
    </citation>
    <scope>NUCLEOTIDE SEQUENCE [LARGE SCALE GENOMIC DNA]</scope>
    <source>
        <strain>ATCC 14580 / DSM 13 / JCM 2505 / CCUG 7422 / NBRC 12200 / NCIMB 9375 / NCTC 10341 / NRRL NRS-1264 / Gibson 46</strain>
    </source>
</reference>